<comment type="function">
    <text evidence="2 3 8 10 13 15 16">Serine/threonine-protein kinase component of the WNK1-SPAK/OSR1 kinase cascade, which acts as a key regulator of blood pressure and regulatory volume increase by promoting ion influx (PubMed:12671053, PubMed:14610273). WNK1 mediates regulatory volume increase in response to hyperosmotic stress by acting as a molecular crowding sensor, which senses cell shrinkage and mediates formation of a membraneless compartment by undergoing liquid-liquid phase separation (By similarity). The membraneless compartment concentrates WNK1 with its substrates, OXSR1/OSR1 and STK39/SPAK, promoting WNK1-dependent phosphorylation and activation of downstream kinases OXSR1/OSR1 and STK39/SPAK (By similarity). Following activation, OXSR1/OSR1 and STK39/SPAK catalyze phosphorylation of ion cotransporters SLC12A1/NKCC2, SLC12A2/NKCC1, SLC12A5/KCC2 and SLC12A6/KCC3, regulating their activity (By similarity). Phosphorylation of Na-K-Cl cotransporters SLC12A2/NKCC1 and SLC12A2/NKCC1 promote their activation and ion influx; simultaneously, phosphorylation of K-Cl cotransporters SLC12A5/KCC2 and SLC12A6/KCC3 inhibit their activity, blocking ion efflux (By similarity). Also acts as a regulator of angiogenesis in endothelial cells (PubMed:19644017). Also acts independently of the WNK1-SPAK/OSR1 kinase cascade by catalyzing phosphorylation of other substrates, such as SYT2, PCF11 and NEDD4L (By similarity). Mediates phosphorylation of SYT2, regulating SYT2 association with phospholipids and membrane-binding (By similarity). Regulates mRNA export in the nucleus by mediating phosphorylation of PCF11, thereby decreasing the association between PCF11 and POLR2A/RNA polymerase II and promoting mRNA export to the cytoplasm (By similarity). Acts as a negative regulator of autophagy (By similarity). Required for the abscission step during mitosis, independently of the WNK1-SPAK/OSR1 kinase cascade (By similarity). WNK1 may also play a role in actin cytoskeletal reorganization (By similarity). Also acts as a scaffold protein independently of its protein kinase activity: negatively regulates cell membrane localization of various transporters and channels, such as SLC4A4, SLC26A6, SLC26A9, TRPV4 and CFTR (PubMed:21317537, PubMed:23542070). Involved in the regulation of epithelial Na(+) channel (ENaC) by promoting activation of SGK1 in a kinase-independent manner: probably acts as a scaffold protein that promotes the recruitment of SGK1 to the mTORC2 complex in response to chloride, leading to mTORC2-dependent phosphorylation and activation of SGK1 (By similarity). Acts as an assembly factor for the ER membrane protein complex independently of its protein kinase activity: associates with EMC2 in the cytoplasm via its amphipathic alpha-helix, and prevents EMC2 ubiquitination and subsequent degradation, thereby promoting EMC2 stabilization (By similarity).</text>
</comment>
<comment type="function">
    <molecule>Isoform 7</molecule>
    <text evidence="3 14">Kinase-defective isoform specifically expressed in kidney, which acts as a dominant-negative regulator of the longer isoform 1 (PubMed:21131289). Does not directly inhibit WNK4 and has no direct effect on sodium and chloride ion transport (By similarity). Down-regulates sodium-chloride cotransporter activity indirectly by inhibiting isoform 1, it associates with isoform 1 and attenuates its kinase activity (By similarity). In kidney, may play an important role regulating sodium and potassium balance (By similarity).</text>
</comment>
<comment type="catalytic activity">
    <reaction evidence="2">
        <text>L-seryl-[protein] + ATP = O-phospho-L-seryl-[protein] + ADP + H(+)</text>
        <dbReference type="Rhea" id="RHEA:17989"/>
        <dbReference type="Rhea" id="RHEA-COMP:9863"/>
        <dbReference type="Rhea" id="RHEA-COMP:11604"/>
        <dbReference type="ChEBI" id="CHEBI:15378"/>
        <dbReference type="ChEBI" id="CHEBI:29999"/>
        <dbReference type="ChEBI" id="CHEBI:30616"/>
        <dbReference type="ChEBI" id="CHEBI:83421"/>
        <dbReference type="ChEBI" id="CHEBI:456216"/>
        <dbReference type="EC" id="2.7.11.1"/>
    </reaction>
</comment>
<comment type="catalytic activity">
    <reaction evidence="2">
        <text>L-threonyl-[protein] + ATP = O-phospho-L-threonyl-[protein] + ADP + H(+)</text>
        <dbReference type="Rhea" id="RHEA:46608"/>
        <dbReference type="Rhea" id="RHEA-COMP:11060"/>
        <dbReference type="Rhea" id="RHEA-COMP:11605"/>
        <dbReference type="ChEBI" id="CHEBI:15378"/>
        <dbReference type="ChEBI" id="CHEBI:30013"/>
        <dbReference type="ChEBI" id="CHEBI:30616"/>
        <dbReference type="ChEBI" id="CHEBI:61977"/>
        <dbReference type="ChEBI" id="CHEBI:456216"/>
        <dbReference type="EC" id="2.7.11.1"/>
    </reaction>
</comment>
<comment type="cofactor">
    <cofactor evidence="2">
        <name>Mg(2+)</name>
        <dbReference type="ChEBI" id="CHEBI:18420"/>
    </cofactor>
</comment>
<comment type="activity regulation">
    <text evidence="2 3">Activated in response to hyperosmotic stress: cell shrinkage promotes formation of a membraneless compartment that concentrates WNK1 with its substrates, OXSR1/OSR1 and STK39/SPAK (By similarity). Activation requires autophosphorylation of Ser-382 and, to a lower extent, Ser-378 (By similarity). Autophosphorylation and subsequent activation is inhibited by increases in intracellular ionic strength: Cl(-) potently inhibits WNK1 kinase activity via direct binding (By similarity). Also inhibited by K(+) ions (By similarity).</text>
</comment>
<comment type="subunit">
    <text evidence="2 3">Interacts with WNK3. Interacts with WNK4; inhibiting the activity of WNK4 (By similarity). Interacts with SGK1; promoting its activation. Associates with the mTORC2 complex (By similarity). Interacts with UVRAG (By similarity).</text>
</comment>
<comment type="subunit">
    <molecule>Isoform 7</molecule>
    <text evidence="3">Interacts with isoform 1; inhibiting isoform 1 activity.</text>
</comment>
<comment type="subcellular location">
    <subcellularLocation>
        <location evidence="6 10">Cytoplasm</location>
    </subcellularLocation>
    <subcellularLocation>
        <location evidence="2">Nucleus</location>
    </subcellularLocation>
    <subcellularLocation>
        <location evidence="2">Cytoplasm</location>
        <location evidence="2">Cytoskeleton</location>
        <location evidence="2">Spindle</location>
    </subcellularLocation>
    <text evidence="2">Mediates formation and localizes to cytoplasmic membraneless compartment in response to hyperosmotic stress (By similarity). Also localizes to the nucleus (By similarity). Localizes to the mitotic spindle during mitosis (By similarity).</text>
</comment>
<comment type="alternative products">
    <event type="alternative splicing"/>
    <isoform>
        <id>P83741-1</id>
        <name>1</name>
        <sequence type="displayed"/>
    </isoform>
    <isoform>
        <id>P83741-2</id>
        <name>2</name>
        <name>Brain and spinal cord variant</name>
        <sequence type="described" ref="VSP_040271"/>
    </isoform>
    <isoform>
        <id>P83741-3</id>
        <name>3</name>
        <name>Dorsal root ganglia and sciatic nerve variant</name>
        <name>DRG and sciatic nerve variant</name>
        <sequence type="described" ref="VSP_040272"/>
    </isoform>
    <isoform>
        <id>P83741-4</id>
        <name>4</name>
        <sequence type="described" ref="VSP_040273"/>
    </isoform>
    <isoform>
        <id>P83741-5</id>
        <name>5</name>
        <sequence type="described" ref="VSP_040274 VSP_040277"/>
    </isoform>
    <isoform>
        <id>P83741-6</id>
        <name>6</name>
        <sequence type="described" ref="VSP_040275 VSP_040276"/>
    </isoform>
    <isoform>
        <id>P83741-7</id>
        <name>7</name>
        <name evidence="22">KS-WNK1</name>
        <name evidence="21">Kidney-Specific</name>
        <sequence type="described" ref="VSP_058592 VSP_058593"/>
    </isoform>
</comment>
<comment type="tissue specificity">
    <text evidence="6 7 9 15">Widely expressed in both adult and embryonic tissue, with highest levels observed in the testis and lower levels in heart, lung, kidney, placenta, brain and skeletal muscle (PubMed:11498583, PubMed:12522152, PubMed:14514722). Expressed in pancreatic duct (PubMed:21317537). Two isoforms are expressed in heart, a single shorter isoform in the kidney (PubMed:14514722). Locates to the distal convoluted tubule, the medullary collecting duct and the cortical collecting duct of the kidney (PubMed:14514722).</text>
</comment>
<comment type="tissue specificity">
    <molecule>Isoform 2</molecule>
    <text evidence="12">Restricted to the nervous system, expressed preferentially in sensory neurons than in motor neurons and in general more abundant in axons than in cell bodies (at protein level) (PubMed:18521183). In the DRG, predominantly expressed in the satellite cells that envelop sensory neurons, but low expression also observed in the cell bodies of neurons (at protein level) (PubMed:18521183). In the sciatic nerve, expressed in the Schwann cells that surround axons and in a mosaic distribution of axons (at protein level) (PubMed:18521183). In the spinal cord, expressed in superficial layers (LI and LII), as well as in the fibers of the Lissauer tract (at protein level) (PubMed:18521183). Also detected in the axon fibers of dorsolateral funiculus and lateral funiculus (at protein level) (PubMed:18521183).</text>
</comment>
<comment type="tissue specificity">
    <molecule>Isoform 3</molecule>
    <text evidence="12">Restricted to the nervous system, expressed preferentially in sensory neurons than in motor neurons and in general more abundant in axons than in cell bodies (at protein level) (PubMed:18521183). In the DRG, predominantly expressed in the satellite cells that envelop sensory neurons, but low expression also observed in the cell bodies of neurons (at protein level) (PubMed:18521183). In the sciatic nerve, expressed in the Schwann cells that surround axons and in a mosaic distribution of axons (at protein level) (PubMed:18521183). In the spinal cord, expressed in superficial layers (LI and LII), as well as in the fibers of the Lissauer tract (at protein level) (PubMed:18521183). Also detected in the axon fibers of dorsolateral funiculus and lateral funiculus (at protein level) (PubMed:18521183).</text>
</comment>
<comment type="domain">
    <text evidence="2">The RFXV motifs mediate recognition with downstream kinases OXSR1/OSR1 and STK39/SPAK.</text>
</comment>
<comment type="domain">
    <text evidence="2">Disordered regions undergo liquid-liquid phase separation (LLPS) for the formation of a cytoplasmic membraneless compartment that concentrates WNK1 with its substrates, OXSR1/OSR1 and STK39/SPAK.</text>
</comment>
<comment type="PTM">
    <text evidence="3">Autophosphorylated at Ser-378 and Ser-382, promoting its activity (By similarity). Autophosphorylation at Ser-382 is inhibited by intracellular calcium (By similarity). Phosphorylation at Thr-58 increases ability to activate SGK1 (By similarity).</text>
</comment>
<comment type="PTM">
    <text evidence="2">Ubiquitinated by the BCR(KLHL3) complex, leading to its degradation (By similarity). Also ubiquitinated by the BCR(KLHL2) complex (By similarity).</text>
</comment>
<comment type="PTM">
    <text evidence="2">May be O-glycosylated.</text>
</comment>
<comment type="disruption phenotype">
    <text evidence="10 13">Embryonic lethality before day 13 of gestation (PubMed:14610273, PubMed:19644017). Embryos show cardiovascular developmental defects: the developing heart has smaller chambers and reduced myocardial trabeculation at E10.5 (PubMed:19644017). Yolk sac vessels in the E10.5 null mutant fail to remodel into a network of large and small vessels and embryonic vessels show defective angiogenesis that involves both arteries and veins (PubMed:19644017). Hypomorphic mice display a significant decrease in blood pressure (PubMed:14610273). Conditional deletion in endothelial cells leads to cardiovascular developmental defects, leading to embryonic lethality (PubMed:19644017).</text>
</comment>
<comment type="miscellaneous">
    <molecule>Isoform 6</molecule>
    <text evidence="23">May be due to intron retention.</text>
</comment>
<comment type="similarity">
    <text evidence="4">Belongs to the protein kinase superfamily. Ser/Thr protein kinase family. WNK subfamily.</text>
</comment>
<comment type="caution">
    <text evidence="2">Was named WNK/'with no lysine(K)' because key residues for catalysis, including the lysine involved in ATP binding, are either not conserved or differ compared to the residues described in other kinase family proteins.</text>
</comment>
<comment type="caution">
    <text evidence="23">It is uncertain whether Met-1 or Met-214 is the initiator.</text>
</comment>
<comment type="caution">
    <text evidence="24">HSN2 was originally thought to be an intronless gene lying within a WNK1 gene intron. It has been shown to be a nervous system-specific exon of WNK1 included in isoform 2 and isoform 3 (PubMed:18521183).</text>
</comment>
<comment type="sequence caution" evidence="23">
    <conflict type="miscellaneous discrepancy">
        <sequence resource="EMBL-CDS" id="AAI46010"/>
    </conflict>
    <text>Probable cloning artifact.</text>
</comment>
<comment type="sequence caution" evidence="23">
    <conflict type="miscellaneous discrepancy">
        <sequence resource="EMBL-CDS" id="AAI46012"/>
    </conflict>
    <text>Probable cloning artifact.</text>
</comment>
<comment type="sequence caution" evidence="23">
    <conflict type="erroneous initiation">
        <sequence resource="EMBL-CDS" id="BAD32213"/>
    </conflict>
    <text>Extended N-terminus.</text>
</comment>
<comment type="sequence caution" evidence="23">
    <conflict type="erroneous gene model prediction">
        <sequence resource="EMBL-CDS" id="DAA04493"/>
    </conflict>
    <text>Includes 3' and 3' intronic sequences.</text>
</comment>
<accession>P83741</accession>
<accession>A6H6V1</accession>
<accession>B2RRJ7</accession>
<accession>B7ZNJ4</accession>
<accession>Q3UZP3</accession>
<accession>Q6A083</accession>
<accession>Q6IFS6</accession>
<accession>Q6VYA0</accession>
<reference key="1">
    <citation type="journal article" date="2003" name="J. Am. Soc. Nephrol.">
        <title>WNK1, a gene within a novel blood pressure control pathway, tissue-specifically generates radically different isoforms with and without a kinase domain.</title>
        <authorList>
            <person name="O'Reilly M."/>
            <person name="Marshall E."/>
            <person name="Speirs H.J."/>
            <person name="Brown R.W."/>
        </authorList>
    </citation>
    <scope>NUCLEOTIDE SEQUENCE [MRNA] (ISOFORMS 1 AND 7)</scope>
    <scope>TISSUE SPECIFICITY</scope>
    <scope>ALTERNATIVE SPLICING</scope>
    <source>
        <strain>C57BL/6J</strain>
    </source>
</reference>
<reference key="2">
    <citation type="journal article" date="2004" name="DNA Res.">
        <title>Prediction of the coding sequences of mouse homologues of KIAA gene: IV. The complete nucleotide sequences of 500 mouse KIAA-homologous cDNAs identified by screening of terminal sequences of cDNA clones randomly sampled from size-fractionated libraries.</title>
        <authorList>
            <person name="Okazaki N."/>
            <person name="Kikuno R."/>
            <person name="Ohara R."/>
            <person name="Inamoto S."/>
            <person name="Koseki H."/>
            <person name="Hiraoka S."/>
            <person name="Saga Y."/>
            <person name="Seino S."/>
            <person name="Nishimura M."/>
            <person name="Kaisho T."/>
            <person name="Hoshino K."/>
            <person name="Kitamura H."/>
            <person name="Nagase T."/>
            <person name="Ohara O."/>
            <person name="Koga H."/>
        </authorList>
    </citation>
    <scope>NUCLEOTIDE SEQUENCE [LARGE SCALE MRNA] (ISOFORM 6)</scope>
    <source>
        <tissue>Embryonic tail</tissue>
    </source>
</reference>
<reference key="3">
    <citation type="journal article" date="2009" name="PLoS Biol.">
        <title>Lineage-specific biology revealed by a finished genome assembly of the mouse.</title>
        <authorList>
            <person name="Church D.M."/>
            <person name="Goodstadt L."/>
            <person name="Hillier L.W."/>
            <person name="Zody M.C."/>
            <person name="Goldstein S."/>
            <person name="She X."/>
            <person name="Bult C.J."/>
            <person name="Agarwala R."/>
            <person name="Cherry J.L."/>
            <person name="DiCuccio M."/>
            <person name="Hlavina W."/>
            <person name="Kapustin Y."/>
            <person name="Meric P."/>
            <person name="Maglott D."/>
            <person name="Birtle Z."/>
            <person name="Marques A.C."/>
            <person name="Graves T."/>
            <person name="Zhou S."/>
            <person name="Teague B."/>
            <person name="Potamousis K."/>
            <person name="Churas C."/>
            <person name="Place M."/>
            <person name="Herschleb J."/>
            <person name="Runnheim R."/>
            <person name="Forrest D."/>
            <person name="Amos-Landgraf J."/>
            <person name="Schwartz D.C."/>
            <person name="Cheng Z."/>
            <person name="Lindblad-Toh K."/>
            <person name="Eichler E.E."/>
            <person name="Ponting C.P."/>
        </authorList>
    </citation>
    <scope>NUCLEOTIDE SEQUENCE [LARGE SCALE GENOMIC DNA]</scope>
    <source>
        <strain>C57BL/6J</strain>
    </source>
</reference>
<reference evidence="23" key="4">
    <citation type="journal article" date="2004" name="Genome Res.">
        <title>The status, quality, and expansion of the NIH full-length cDNA project: the Mammalian Gene Collection (MGC).</title>
        <authorList>
            <consortium name="The MGC Project Team"/>
        </authorList>
    </citation>
    <scope>NUCLEOTIDE SEQUENCE [LARGE SCALE MRNA] (ISOFORMS 4 AND 5)</scope>
    <scope>PARTIAL NUCLEOTIDE SEQUENCE [LARGE SCALE MRNA] (ISOFORMS 2/3)</scope>
    <source>
        <strain evidence="11">C57BL/6J</strain>
        <tissue evidence="25">Embryo</tissue>
    </source>
</reference>
<reference key="5">
    <citation type="journal article" date="2005" name="Science">
        <title>The transcriptional landscape of the mammalian genome.</title>
        <authorList>
            <person name="Carninci P."/>
            <person name="Kasukawa T."/>
            <person name="Katayama S."/>
            <person name="Gough J."/>
            <person name="Frith M.C."/>
            <person name="Maeda N."/>
            <person name="Oyama R."/>
            <person name="Ravasi T."/>
            <person name="Lenhard B."/>
            <person name="Wells C."/>
            <person name="Kodzius R."/>
            <person name="Shimokawa K."/>
            <person name="Bajic V.B."/>
            <person name="Brenner S.E."/>
            <person name="Batalov S."/>
            <person name="Forrest A.R."/>
            <person name="Zavolan M."/>
            <person name="Davis M.J."/>
            <person name="Wilming L.G."/>
            <person name="Aidinis V."/>
            <person name="Allen J.E."/>
            <person name="Ambesi-Impiombato A."/>
            <person name="Apweiler R."/>
            <person name="Aturaliya R.N."/>
            <person name="Bailey T.L."/>
            <person name="Bansal M."/>
            <person name="Baxter L."/>
            <person name="Beisel K.W."/>
            <person name="Bersano T."/>
            <person name="Bono H."/>
            <person name="Chalk A.M."/>
            <person name="Chiu K.P."/>
            <person name="Choudhary V."/>
            <person name="Christoffels A."/>
            <person name="Clutterbuck D.R."/>
            <person name="Crowe M.L."/>
            <person name="Dalla E."/>
            <person name="Dalrymple B.P."/>
            <person name="de Bono B."/>
            <person name="Della Gatta G."/>
            <person name="di Bernardo D."/>
            <person name="Down T."/>
            <person name="Engstrom P."/>
            <person name="Fagiolini M."/>
            <person name="Faulkner G."/>
            <person name="Fletcher C.F."/>
            <person name="Fukushima T."/>
            <person name="Furuno M."/>
            <person name="Futaki S."/>
            <person name="Gariboldi M."/>
            <person name="Georgii-Hemming P."/>
            <person name="Gingeras T.R."/>
            <person name="Gojobori T."/>
            <person name="Green R.E."/>
            <person name="Gustincich S."/>
            <person name="Harbers M."/>
            <person name="Hayashi Y."/>
            <person name="Hensch T.K."/>
            <person name="Hirokawa N."/>
            <person name="Hill D."/>
            <person name="Huminiecki L."/>
            <person name="Iacono M."/>
            <person name="Ikeo K."/>
            <person name="Iwama A."/>
            <person name="Ishikawa T."/>
            <person name="Jakt M."/>
            <person name="Kanapin A."/>
            <person name="Katoh M."/>
            <person name="Kawasawa Y."/>
            <person name="Kelso J."/>
            <person name="Kitamura H."/>
            <person name="Kitano H."/>
            <person name="Kollias G."/>
            <person name="Krishnan S.P."/>
            <person name="Kruger A."/>
            <person name="Kummerfeld S.K."/>
            <person name="Kurochkin I.V."/>
            <person name="Lareau L.F."/>
            <person name="Lazarevic D."/>
            <person name="Lipovich L."/>
            <person name="Liu J."/>
            <person name="Liuni S."/>
            <person name="McWilliam S."/>
            <person name="Madan Babu M."/>
            <person name="Madera M."/>
            <person name="Marchionni L."/>
            <person name="Matsuda H."/>
            <person name="Matsuzawa S."/>
            <person name="Miki H."/>
            <person name="Mignone F."/>
            <person name="Miyake S."/>
            <person name="Morris K."/>
            <person name="Mottagui-Tabar S."/>
            <person name="Mulder N."/>
            <person name="Nakano N."/>
            <person name="Nakauchi H."/>
            <person name="Ng P."/>
            <person name="Nilsson R."/>
            <person name="Nishiguchi S."/>
            <person name="Nishikawa S."/>
            <person name="Nori F."/>
            <person name="Ohara O."/>
            <person name="Okazaki Y."/>
            <person name="Orlando V."/>
            <person name="Pang K.C."/>
            <person name="Pavan W.J."/>
            <person name="Pavesi G."/>
            <person name="Pesole G."/>
            <person name="Petrovsky N."/>
            <person name="Piazza S."/>
            <person name="Reed J."/>
            <person name="Reid J.F."/>
            <person name="Ring B.Z."/>
            <person name="Ringwald M."/>
            <person name="Rost B."/>
            <person name="Ruan Y."/>
            <person name="Salzberg S.L."/>
            <person name="Sandelin A."/>
            <person name="Schneider C."/>
            <person name="Schoenbach C."/>
            <person name="Sekiguchi K."/>
            <person name="Semple C.A."/>
            <person name="Seno S."/>
            <person name="Sessa L."/>
            <person name="Sheng Y."/>
            <person name="Shibata Y."/>
            <person name="Shimada H."/>
            <person name="Shimada K."/>
            <person name="Silva D."/>
            <person name="Sinclair B."/>
            <person name="Sperling S."/>
            <person name="Stupka E."/>
            <person name="Sugiura K."/>
            <person name="Sultana R."/>
            <person name="Takenaka Y."/>
            <person name="Taki K."/>
            <person name="Tammoja K."/>
            <person name="Tan S.L."/>
            <person name="Tang S."/>
            <person name="Taylor M.S."/>
            <person name="Tegner J."/>
            <person name="Teichmann S.A."/>
            <person name="Ueda H.R."/>
            <person name="van Nimwegen E."/>
            <person name="Verardo R."/>
            <person name="Wei C.L."/>
            <person name="Yagi K."/>
            <person name="Yamanishi H."/>
            <person name="Zabarovsky E."/>
            <person name="Zhu S."/>
            <person name="Zimmer A."/>
            <person name="Hide W."/>
            <person name="Bult C."/>
            <person name="Grimmond S.M."/>
            <person name="Teasdale R.D."/>
            <person name="Liu E.T."/>
            <person name="Brusic V."/>
            <person name="Quackenbush J."/>
            <person name="Wahlestedt C."/>
            <person name="Mattick J.S."/>
            <person name="Hume D.A."/>
            <person name="Kai C."/>
            <person name="Sasaki D."/>
            <person name="Tomaru Y."/>
            <person name="Fukuda S."/>
            <person name="Kanamori-Katayama M."/>
            <person name="Suzuki M."/>
            <person name="Aoki J."/>
            <person name="Arakawa T."/>
            <person name="Iida J."/>
            <person name="Imamura K."/>
            <person name="Itoh M."/>
            <person name="Kato T."/>
            <person name="Kawaji H."/>
            <person name="Kawagashira N."/>
            <person name="Kawashima T."/>
            <person name="Kojima M."/>
            <person name="Kondo S."/>
            <person name="Konno H."/>
            <person name="Nakano K."/>
            <person name="Ninomiya N."/>
            <person name="Nishio T."/>
            <person name="Okada M."/>
            <person name="Plessy C."/>
            <person name="Shibata K."/>
            <person name="Shiraki T."/>
            <person name="Suzuki S."/>
            <person name="Tagami M."/>
            <person name="Waki K."/>
            <person name="Watahiki A."/>
            <person name="Okamura-Oho Y."/>
            <person name="Suzuki H."/>
            <person name="Kawai J."/>
            <person name="Hayashizaki Y."/>
        </authorList>
    </citation>
    <scope>NUCLEOTIDE SEQUENCE [LARGE SCALE MRNA] OF 1-578</scope>
    <source>
        <strain>C57BL/6J</strain>
        <tissue>Embryo</tissue>
    </source>
</reference>
<reference evidence="23" key="6">
    <citation type="journal article" date="2001" name="Science">
        <title>Human hypertension caused by mutations in WNK kinases.</title>
        <authorList>
            <person name="Wilson F.H."/>
            <person name="Disse-Nicodeme S."/>
            <person name="Choate K.A."/>
            <person name="Ishikawa K."/>
            <person name="Nelson-Williams C."/>
            <person name="Desitter I."/>
            <person name="Gunel M."/>
            <person name="Milford D.V."/>
            <person name="Lipkin G.W."/>
            <person name="Achard J.-M."/>
            <person name="Feely M.P."/>
            <person name="Dussol B."/>
            <person name="Berland Y."/>
            <person name="Unwin R.J."/>
            <person name="Mayan H."/>
            <person name="Simon D.B."/>
            <person name="Farfel Z."/>
            <person name="Jeunemaitre X."/>
            <person name="Lifton R.P."/>
        </authorList>
    </citation>
    <scope>SUBCELLULAR LOCATION</scope>
    <scope>TISSUE SPECIFICITY</scope>
</reference>
<reference evidence="23" key="7">
    <citation type="journal article" date="2003" name="J. Clin. Invest.">
        <title>WNK kinases regulate thiazide-sensitive Na-Cl cotransport.</title>
        <authorList>
            <person name="Yang C.-L."/>
            <person name="Angell J."/>
            <person name="Mitchell R."/>
            <person name="Ellison D.H."/>
        </authorList>
    </citation>
    <scope>FUNCTION</scope>
</reference>
<reference key="8">
    <citation type="journal article" date="2003" name="Proc. Natl. Acad. Sci. U.S.A.">
        <title>WNK1, a kinase mutated in inherited hypertension with hyperkalemia, localizes to diverse Cl- -transporting epithelia.</title>
        <authorList>
            <person name="Choate K.A."/>
            <person name="Kahle K.T."/>
            <person name="Wilson F.H."/>
            <person name="Nelson-Williams C."/>
            <person name="Lifton R.P."/>
        </authorList>
    </citation>
    <scope>SUBCELLULAR LOCATION</scope>
    <scope>TISSUE SPECIFICITY</scope>
</reference>
<reference key="9">
    <citation type="journal article" date="2003" name="Proc. Natl. Acad. Sci. U.S.A.">
        <title>Wnk1 kinase deficiency lowers blood pressure in mice: a gene-trap screen to identify potential targets for therapeutic intervention.</title>
        <authorList>
            <person name="Zambrowicz B.P."/>
            <person name="Abuin A."/>
            <person name="Ramirez-Solis R."/>
            <person name="Richter L.J."/>
            <person name="Piggott J."/>
            <person name="BeltrandelRio H."/>
            <person name="Buxton E.C."/>
            <person name="Edwards J."/>
            <person name="Finch R.A."/>
            <person name="Friddle C.J."/>
            <person name="Gupta A."/>
            <person name="Hansen G."/>
            <person name="Hu Y."/>
            <person name="Huang W."/>
            <person name="Jaing C."/>
            <person name="Key B.W. Jr."/>
            <person name="Kipp P."/>
            <person name="Kohlhauff B."/>
            <person name="Ma Z.Q."/>
            <person name="Markesich D."/>
            <person name="Payne R."/>
            <person name="Potter D.G."/>
            <person name="Qian N."/>
            <person name="Shaw J."/>
            <person name="Schrick J."/>
            <person name="Shi Z.Z."/>
            <person name="Sparks M.J."/>
            <person name="Van Sligtenhorst I."/>
            <person name="Vogel P."/>
            <person name="Walke W."/>
            <person name="Xu N."/>
            <person name="Zhu Q."/>
            <person name="Person C."/>
            <person name="Sands A.T."/>
        </authorList>
    </citation>
    <scope>FUNCTION</scope>
    <scope>DISRUPTION PHENOTYPE</scope>
</reference>
<reference key="10">
    <citation type="journal article" date="2004" name="Am. J. Hum. Genet.">
        <title>Identification of a novel gene (HSN2) causing hereditary sensory and autonomic neuropathy type II through the study of Canadian genetic isolates.</title>
        <authorList>
            <person name="Lafreniere R.G."/>
            <person name="MacDonald M.L.E."/>
            <person name="Dube M.-P."/>
            <person name="MacFarlane J."/>
            <person name="O'Driscoll M."/>
            <person name="Brais B."/>
            <person name="Meilleur S."/>
            <person name="Brinkman R.R."/>
            <person name="Dadivas O."/>
            <person name="Pape T."/>
            <person name="Platon C."/>
            <person name="Radomski C."/>
            <person name="Risler J."/>
            <person name="Thompson J."/>
            <person name="Guerra-Escobio A.-M."/>
            <person name="Davar G."/>
            <person name="Breakefield X.O."/>
            <person name="Pimstone S.N."/>
            <person name="Green R."/>
            <person name="Pryse-Phillips W."/>
            <person name="Goldberg Y.P."/>
            <person name="Younghusband H.B."/>
            <person name="Hayden M.R."/>
            <person name="Sherrington R."/>
            <person name="Rouleau G.A."/>
            <person name="Samuels M.E."/>
        </authorList>
    </citation>
    <scope>IDENTIFICATION OF THE HSN2 EXON</scope>
</reference>
<reference key="11">
    <citation type="journal article" date="2006" name="Am. J. Physiol.">
        <title>Dominant-negative regulation of WNK1 by its kidney-specific kinase-defective isoform.</title>
        <authorList>
            <person name="Subramanya A.R."/>
            <person name="Yang C.L."/>
            <person name="Zhu X."/>
            <person name="Ellison D.H."/>
        </authorList>
    </citation>
    <scope>ALTERNATIVE SPLICING</scope>
</reference>
<reference key="12">
    <citation type="journal article" date="2007" name="Proc. Natl. Acad. Sci. U.S.A.">
        <title>Large-scale phosphorylation analysis of mouse liver.</title>
        <authorList>
            <person name="Villen J."/>
            <person name="Beausoleil S.A."/>
            <person name="Gerber S.A."/>
            <person name="Gygi S.P."/>
        </authorList>
    </citation>
    <scope>PHOSPHORYLATION [LARGE SCALE ANALYSIS] AT SER-2027</scope>
    <scope>IDENTIFICATION BY MASS SPECTROMETRY [LARGE SCALE ANALYSIS]</scope>
    <source>
        <tissue>Liver</tissue>
    </source>
</reference>
<reference key="13">
    <citation type="journal article" date="2008" name="J. Clin. Invest.">
        <title>Mutations in the nervous system--specific HSN2 exon of WNK1 cause hereditary sensory neuropathy type II.</title>
        <authorList>
            <person name="Shekarabi M."/>
            <person name="Girard N."/>
            <person name="Riviere J.B."/>
            <person name="Dion P."/>
            <person name="Houle M."/>
            <person name="Toulouse A."/>
            <person name="Lafreniere R.G."/>
            <person name="Vercauteren F."/>
            <person name="Hince P."/>
            <person name="Laganiere J."/>
            <person name="Rochefort D."/>
            <person name="Faivre L."/>
            <person name="Samuels M."/>
            <person name="Rouleau G.A."/>
        </authorList>
    </citation>
    <scope>ALTERNATIVE SPLICING (ISOFORMS 2 AND 3)</scope>
    <scope>TISSUE SPECIFICITY</scope>
</reference>
<reference key="14">
    <citation type="journal article" date="2009" name="Am. J. Pathol.">
        <title>Endothelial-specific expression of WNK1 kinase is essential for angiogenesis and heart development in mice.</title>
        <authorList>
            <person name="Xie J."/>
            <person name="Wu T."/>
            <person name="Xu K."/>
            <person name="Huang I.K."/>
            <person name="Cleaver O."/>
            <person name="Huang C.L."/>
        </authorList>
    </citation>
    <scope>FUNCTION</scope>
    <scope>DISRUPTION PHENOTYPE</scope>
</reference>
<reference key="15">
    <citation type="journal article" date="2010" name="Cell">
        <title>A tissue-specific atlas of mouse protein phosphorylation and expression.</title>
        <authorList>
            <person name="Huttlin E.L."/>
            <person name="Jedrychowski M.P."/>
            <person name="Elias J.E."/>
            <person name="Goswami T."/>
            <person name="Rad R."/>
            <person name="Beausoleil S.A."/>
            <person name="Villen J."/>
            <person name="Haas W."/>
            <person name="Sowa M.E."/>
            <person name="Gygi S.P."/>
        </authorList>
    </citation>
    <scope>PHOSPHORYLATION [LARGE SCALE ANALYSIS] AT THR-17; SER-2027; SER-2265 AND SER-2281</scope>
    <scope>IDENTIFICATION BY MASS SPECTROMETRY [LARGE SCALE ANALYSIS]</scope>
    <source>
        <tissue>Brain</tissue>
        <tissue>Brown adipose tissue</tissue>
        <tissue>Heart</tissue>
        <tissue>Kidney</tissue>
        <tissue>Liver</tissue>
        <tissue>Lung</tissue>
        <tissue>Pancreas</tissue>
        <tissue>Spleen</tissue>
        <tissue>Testis</tissue>
    </source>
</reference>
<reference key="16">
    <citation type="journal article" date="2011" name="Hum. Mol. Genet.">
        <title>Downregulation of NCC and NKCC2 cotransporters by kidney-specific WNK1 revealed by gene disruption and transgenic mouse models.</title>
        <authorList>
            <person name="Liu Z."/>
            <person name="Xie J."/>
            <person name="Wu T."/>
            <person name="Truong T."/>
            <person name="Auchus R.J."/>
            <person name="Huang C.L."/>
        </authorList>
    </citation>
    <scope>FUNCTION (ISOFORM 7)</scope>
</reference>
<reference key="17">
    <citation type="journal article" date="2011" name="J. Clin. Invest.">
        <title>IRBIT governs epithelial secretion in mice by antagonizing the WNK/SPAK kinase pathway.</title>
        <authorList>
            <person name="Yang D."/>
            <person name="Li Q."/>
            <person name="So I."/>
            <person name="Huang C.L."/>
            <person name="Ando H."/>
            <person name="Mizutani A."/>
            <person name="Seki G."/>
            <person name="Mikoshiba K."/>
            <person name="Thomas P.J."/>
            <person name="Muallem S."/>
        </authorList>
    </citation>
    <scope>FUNCTION</scope>
    <scope>TISSUE SPECIFICITY</scope>
    <scope>MUTAGENESIS OF ASP-368</scope>
</reference>
<reference key="18">
    <citation type="journal article" date="2013" name="Gastroenterology">
        <title>Irbit mediates synergy between ca(2+) and cAMP signaling pathways during epithelial transport in mice.</title>
        <authorList>
            <person name="Park S."/>
            <person name="Shcheynikov N."/>
            <person name="Hong J.H."/>
            <person name="Zheng C."/>
            <person name="Suh S.H."/>
            <person name="Kawaai K."/>
            <person name="Ando H."/>
            <person name="Mizutani A."/>
            <person name="Abe T."/>
            <person name="Kiyonari H."/>
            <person name="Seki G."/>
            <person name="Yule D."/>
            <person name="Mikoshiba K."/>
            <person name="Muallem S."/>
        </authorList>
    </citation>
    <scope>FUNCTION</scope>
</reference>
<name>WNK1_MOUSE</name>
<proteinExistence type="evidence at protein level"/>
<keyword id="KW-0025">Alternative splicing</keyword>
<keyword id="KW-0067">ATP-binding</keyword>
<keyword id="KW-0868">Chloride</keyword>
<keyword id="KW-0963">Cytoplasm</keyword>
<keyword id="KW-0206">Cytoskeleton</keyword>
<keyword id="KW-0418">Kinase</keyword>
<keyword id="KW-0547">Nucleotide-binding</keyword>
<keyword id="KW-0539">Nucleus</keyword>
<keyword id="KW-0597">Phosphoprotein</keyword>
<keyword id="KW-1185">Reference proteome</keyword>
<keyword id="KW-0723">Serine/threonine-protein kinase</keyword>
<keyword id="KW-0808">Transferase</keyword>
<keyword id="KW-0832">Ubl conjugation</keyword>
<sequence>MSDGAAEKQSGTPGFLTPPAPVPKNGSSSDSSVGEKLGATVADSGVGRTEEYRRRRHTMDKDSRGAAATTTPTEHRFFRRSVICDSNATALELPGLPLSIPQPSVPAVVPQSAPPEPHREETLTATVASQVSQQPSAAASPGEQAVVGSATTTVPSSTSKDRPVSQPSLVGSKEEPPPSRSGSGSGGASAKEAQEDRSQQQDDIEELETKAVGMSNDGRFLKFDIEIGRGSFKTVYKGLDTETTVEVAWCELQDRKLTKSERQRFKEEAEMLKGLQHPNIVRFYDSWESTVKGKKCIVLVTELMTSGTLKTYLKRFKVMKIKVLRSWCRQILKGLQFLHTRTPPIIHRDLKCDNIFITGPTGSVKIGDLGLATLKRASFAKSVIGTPEFMAPEMYEEKYDESVDVYAFGMCMLEMATSEYPYSECQNAAQIYRRVTSGVKPASFDKVAIPEVKEIIEGCIRQNKDERYSIKDLLNHAFFQEETGVRVELAEEDDGEKIAIKLWLRIEDIKKLKGKYKDNEAIEFSFDLERDVPEDVAQEMVESGYVCEGDHKTMAKAIKDRVSLIKRKREQRQLVREEQEKRKQEESSFKQQNEQQASVSQAGIQQLSAASTGIPTAPATSASVSTQVEPEEPEADQHQQLQYQQPSISVLSDGTIDSGQGSSVFTESRVSSQQTVSYGSQHEQAHSTGTAPGHTVSSIQAQSQPHGVYPPSSMAQGQNQGQPSSSLAGVLSSQPIQHPQQQGIQPTVPSQQAVQYSLPQAASSSEGTTAQPVSQPQVSAGTQLPVSQTVATVQGEPHIPVSTQPSVVPVHSGAHFLPMGQPIPTSLLPQYPVSQIPISTPHVSTAQTGFSSVPITMAAGINQPLLTLASSATASSIPGGSPVVPNQLPTLLQPVNQLQSQVHPQLLQPTTVQSIGIPANLGQAAEGPLPSGDVLYQGFPSRLPPQYPGDSNIAPSSNVASVCIHSTVLAPPSMPTEALATQGYFPTVVQPYVESTPLVPMGSVGGQVQVSQPAVSLTQQPPTTSSQQAVLESTQGVSQAAPPEQTPITQSQPTQPVPLVTSADSAHSDVASGMSDGNENAPSSSGRHEGRTTKRHYRKSVRSRSRHEKTSRPKLRILNVSNKGDRVVECQLETHNRKMVTFKFDLDGDNPEEIATIMVNNDFILAIERESFVAQVREIIEKADEMLSEDVSVEPEGDQGLESLQGKDDYGFPGSQKLEGEFKQPIAVSSMPQQIGVPTSSLTQVVHSAGRRFIVSPVPESRLRESKVFTSDISDPVVASTSQAPGMNLSHSASSLSLQQAFSELKHGQMTEGPNTAPPNFNHMAGPTFSPFLASIAGVQTVAASTPSVSVPITSSPLNDISTSVMQSETALPTEKGIVGVTTTSTGVVASGGLTTMSVSESPTSSSAVSSSTVPAVVTVSTPSQPVQASTSGSIASSTGSFPPGTFSTTTATTMGSVVAPDAKPPTVLLQQVASNTAGVAIVTSVSTTTPFPGMASQPSLPLSSSTSAPTLAETMVVSAHSLDKASHSSTAGLGLSFCAPSSSSSSGTAVSTSVSQPGMVHPLVISSAVVSTPGLPQPVVPTSTPLLPQVPNIPPLVQPVVNVPAVQQTLIHSQPQPALLPNQPHTHCPEMDADTQSKAPGIDDIKTLEEKLRSLFSEHSSSGTQHASVSLETPLVVETTVTPGITTTAVAPSKLMTSTTSTCLPPTSLPLGAAGMPVMPVGTPGQVSTPGTHASAPVGTATGVKPGTTPPKPTKTVVPPVGTELSAGTVPCEQLPPFPGPSLIQSQQPLEDLDAQLRRTLSPETITVAPAVGPLSTMSSTTVTEAGTRLQKDGTEGHVTATSSGAGVVKMGRFQVSVTMDDAQKERKNRSEDTKSVHFESSTSESSVLSSSSPESTLVKPEPNGISISGISLDVPDSTHKAPTPEAKSDAGQPTKVGRFQVTTTANKVGRFSVSRTEDKVTELKKEGPVTSPPFRDSEQTVIPAVIPKKEKPELAEPSHLNGPSSDLEAAFLSRGTEDGSGSPHSPPHLCSKSLPVQNLSQSLSNSFNSSYMSSDNESDIEDEDLRLELRRLREKHLKEIQDLQSRQKHEIESLYTKLGKVPPAVIIPPAAPLSGRRRRPTKSKGSKSSRSSSLGNKSPQLSGNLSGQSGTSVLHPQQTLHPAGNTPETGHNQLLQPLKPSPSSDNLYSAFTSDGAISVPSLSAPGQGTSSTNTVGGTVSSQAAQAQPPAMTSSRKGTFTDDLHKLVDNWARDAMNLSGRRGSKGHMNYEGPGMARKFSAPGQLCVPMTSNLGGSTPISAASATSLGHFTKSMCPPQQYGFPPAPFGTQWSGTGGPAPQPLGQFQPVGTASLQNFNISNLQKSISNPPGSNLRTT</sequence>
<dbReference type="EC" id="2.7.11.1" evidence="2"/>
<dbReference type="EMBL" id="AY309076">
    <property type="protein sequence ID" value="AAQ77243.1"/>
    <property type="molecule type" value="mRNA"/>
</dbReference>
<dbReference type="EMBL" id="AY319934">
    <property type="protein sequence ID" value="AAQ84611.1"/>
    <property type="molecule type" value="mRNA"/>
</dbReference>
<dbReference type="EMBL" id="AK172935">
    <property type="protein sequence ID" value="BAD32213.1"/>
    <property type="status" value="ALT_INIT"/>
    <property type="molecule type" value="mRNA"/>
</dbReference>
<dbReference type="EMBL" id="AC113092">
    <property type="status" value="NOT_ANNOTATED_CDS"/>
    <property type="molecule type" value="Genomic_DNA"/>
</dbReference>
<dbReference type="EMBL" id="AC117667">
    <property type="status" value="NOT_ANNOTATED_CDS"/>
    <property type="molecule type" value="Genomic_DNA"/>
</dbReference>
<dbReference type="EMBL" id="BC056761">
    <property type="protein sequence ID" value="AAH56761.1"/>
    <property type="molecule type" value="mRNA"/>
</dbReference>
<dbReference type="EMBL" id="BC138445">
    <property type="protein sequence ID" value="AAI38446.1"/>
    <property type="molecule type" value="mRNA"/>
</dbReference>
<dbReference type="EMBL" id="BC145282">
    <property type="protein sequence ID" value="AAI45283.1"/>
    <property type="molecule type" value="mRNA"/>
</dbReference>
<dbReference type="EMBL" id="BC146009">
    <property type="protein sequence ID" value="AAI46010.1"/>
    <property type="status" value="ALT_SEQ"/>
    <property type="molecule type" value="mRNA"/>
</dbReference>
<dbReference type="EMBL" id="BC146011">
    <property type="protein sequence ID" value="AAI46012.1"/>
    <property type="status" value="ALT_SEQ"/>
    <property type="molecule type" value="mRNA"/>
</dbReference>
<dbReference type="EMBL" id="BC171955">
    <property type="protein sequence ID" value="AAI71955.1"/>
    <property type="molecule type" value="mRNA"/>
</dbReference>
<dbReference type="EMBL" id="AK133738">
    <property type="protein sequence ID" value="BAE21813.1"/>
    <property type="molecule type" value="mRNA"/>
</dbReference>
<dbReference type="EMBL" id="BK004107">
    <property type="protein sequence ID" value="DAA04493.1"/>
    <property type="status" value="ALT_SEQ"/>
    <property type="molecule type" value="Genomic_DNA"/>
</dbReference>
<dbReference type="CCDS" id="CCDS20478.1">
    <molecule id="P83741-1"/>
</dbReference>
<dbReference type="CCDS" id="CCDS51888.1">
    <molecule id="P83741-5"/>
</dbReference>
<dbReference type="CCDS" id="CCDS57444.1">
    <molecule id="P83741-3"/>
</dbReference>
<dbReference type="CCDS" id="CCDS57445.1">
    <molecule id="P83741-2"/>
</dbReference>
<dbReference type="CCDS" id="CCDS85147.1">
    <molecule id="P83741-4"/>
</dbReference>
<dbReference type="RefSeq" id="NP_001171949.1">
    <molecule id="P83741-4"/>
    <property type="nucleotide sequence ID" value="NM_001185020.1"/>
</dbReference>
<dbReference type="RefSeq" id="NP_001171950.1">
    <molecule id="P83741-5"/>
    <property type="nucleotide sequence ID" value="NM_001185021.1"/>
</dbReference>
<dbReference type="RefSeq" id="NP_001186012.1">
    <molecule id="P83741-2"/>
    <property type="nucleotide sequence ID" value="NM_001199083.1"/>
</dbReference>
<dbReference type="RefSeq" id="NP_001186013.1">
    <molecule id="P83741-3"/>
    <property type="nucleotide sequence ID" value="NM_001199084.1"/>
</dbReference>
<dbReference type="RefSeq" id="NP_941992.2">
    <molecule id="P83741-1"/>
    <property type="nucleotide sequence ID" value="NM_198703.3"/>
</dbReference>
<dbReference type="RefSeq" id="XP_017177038.1">
    <molecule id="P83741-1"/>
    <property type="nucleotide sequence ID" value="XM_017321549.1"/>
</dbReference>
<dbReference type="RefSeq" id="XP_017177043.1">
    <molecule id="P83741-5"/>
    <property type="nucleotide sequence ID" value="XM_017321554.1"/>
</dbReference>
<dbReference type="RefSeq" id="XP_017177046.1">
    <molecule id="P83741-4"/>
    <property type="nucleotide sequence ID" value="XM_017321557.1"/>
</dbReference>
<dbReference type="RefSeq" id="XP_036021975.1">
    <molecule id="P83741-3"/>
    <property type="nucleotide sequence ID" value="XM_036166082.1"/>
</dbReference>
<dbReference type="RefSeq" id="XP_036021976.1">
    <molecule id="P83741-2"/>
    <property type="nucleotide sequence ID" value="XM_036166083.1"/>
</dbReference>
<dbReference type="BMRB" id="P83741"/>
<dbReference type="SMR" id="P83741"/>
<dbReference type="BioGRID" id="231244">
    <property type="interactions" value="20"/>
</dbReference>
<dbReference type="FunCoup" id="P83741">
    <property type="interactions" value="1907"/>
</dbReference>
<dbReference type="IntAct" id="P83741">
    <property type="interactions" value="1"/>
</dbReference>
<dbReference type="MINT" id="P83741"/>
<dbReference type="STRING" id="10090.ENSMUSP00000086017"/>
<dbReference type="ChEMBL" id="CHEMBL2176799"/>
<dbReference type="GlyConnect" id="2429">
    <molecule id="P83741-2"/>
    <property type="glycosylation" value="1 N-Linked glycan (1 site)"/>
</dbReference>
<dbReference type="GlyGen" id="P83741">
    <property type="glycosylation" value="35 sites, 1 N-linked glycan (1 site), 1 O-linked glycan (31 sites)"/>
</dbReference>
<dbReference type="iPTMnet" id="P83741"/>
<dbReference type="PhosphoSitePlus" id="P83741"/>
<dbReference type="SwissPalm" id="P83741"/>
<dbReference type="jPOST" id="P83741"/>
<dbReference type="PaxDb" id="10090-ENSMUSP00000063001"/>
<dbReference type="PeptideAtlas" id="P83741"/>
<dbReference type="ProteomicsDB" id="299987">
    <molecule id="P83741-1"/>
</dbReference>
<dbReference type="ProteomicsDB" id="299988">
    <molecule id="P83741-2"/>
</dbReference>
<dbReference type="ProteomicsDB" id="299989">
    <molecule id="P83741-3"/>
</dbReference>
<dbReference type="ProteomicsDB" id="299990">
    <molecule id="P83741-4"/>
</dbReference>
<dbReference type="ProteomicsDB" id="299991">
    <molecule id="P83741-5"/>
</dbReference>
<dbReference type="ProteomicsDB" id="299992">
    <molecule id="P83741-6"/>
</dbReference>
<dbReference type="ProteomicsDB" id="299993">
    <molecule id="P83741-7"/>
</dbReference>
<dbReference type="Pumba" id="P83741"/>
<dbReference type="Antibodypedia" id="22083">
    <property type="antibodies" value="601 antibodies from 41 providers"/>
</dbReference>
<dbReference type="DNASU" id="232341"/>
<dbReference type="Ensembl" id="ENSMUST00000060043.13">
    <molecule id="P83741-1"/>
    <property type="protein sequence ID" value="ENSMUSP00000063001.7"/>
    <property type="gene ID" value="ENSMUSG00000045962.17"/>
</dbReference>
<dbReference type="Ensembl" id="ENSMUST00000088644.13">
    <molecule id="P83741-3"/>
    <property type="protein sequence ID" value="ENSMUSP00000086017.7"/>
    <property type="gene ID" value="ENSMUSG00000045962.17"/>
</dbReference>
<dbReference type="Ensembl" id="ENSMUST00000088646.12">
    <molecule id="P83741-5"/>
    <property type="protein sequence ID" value="ENSMUSP00000086019.6"/>
    <property type="gene ID" value="ENSMUSG00000045962.17"/>
</dbReference>
<dbReference type="Ensembl" id="ENSMUST00000177761.8">
    <molecule id="P83741-2"/>
    <property type="protein sequence ID" value="ENSMUSP00000136777.2"/>
    <property type="gene ID" value="ENSMUSG00000045962.17"/>
</dbReference>
<dbReference type="Ensembl" id="ENSMUST00000203030.3">
    <molecule id="P83741-4"/>
    <property type="protein sequence ID" value="ENSMUSP00000145304.2"/>
    <property type="gene ID" value="ENSMUSG00000045962.17"/>
</dbReference>
<dbReference type="GeneID" id="232341"/>
<dbReference type="KEGG" id="mmu:232341"/>
<dbReference type="UCSC" id="uc009dmt.2">
    <molecule id="P83741-1"/>
    <property type="organism name" value="mouse"/>
</dbReference>
<dbReference type="UCSC" id="uc009dmu.2">
    <molecule id="P83741-5"/>
    <property type="organism name" value="mouse"/>
</dbReference>
<dbReference type="UCSC" id="uc009dmv.2">
    <molecule id="P83741-6"/>
    <property type="organism name" value="mouse"/>
</dbReference>
<dbReference type="UCSC" id="uc012ers.1">
    <molecule id="P83741-3"/>
    <property type="organism name" value="mouse"/>
</dbReference>
<dbReference type="UCSC" id="uc012ert.1">
    <molecule id="P83741-2"/>
    <property type="organism name" value="mouse"/>
</dbReference>
<dbReference type="UCSC" id="uc012eru.1">
    <molecule id="P83741-4"/>
    <property type="organism name" value="mouse"/>
</dbReference>
<dbReference type="AGR" id="MGI:2442092"/>
<dbReference type="CTD" id="65125"/>
<dbReference type="MGI" id="MGI:2442092">
    <property type="gene designation" value="Wnk1"/>
</dbReference>
<dbReference type="VEuPathDB" id="HostDB:ENSMUSG00000045962"/>
<dbReference type="eggNOG" id="KOG0584">
    <property type="taxonomic scope" value="Eukaryota"/>
</dbReference>
<dbReference type="GeneTree" id="ENSGT00940000155474"/>
<dbReference type="HOGENOM" id="CLU_000550_0_0_1"/>
<dbReference type="InParanoid" id="P83741"/>
<dbReference type="OMA" id="PEPNGMT"/>
<dbReference type="PhylomeDB" id="P83741"/>
<dbReference type="TreeFam" id="TF315363"/>
<dbReference type="BioGRID-ORCS" id="232341">
    <property type="hits" value="21 hits in 85 CRISPR screens"/>
</dbReference>
<dbReference type="CD-CODE" id="62836ADF">
    <property type="entry name" value="WNK body"/>
</dbReference>
<dbReference type="ChiTaRS" id="Wnk1">
    <property type="organism name" value="mouse"/>
</dbReference>
<dbReference type="PRO" id="PR:P83741"/>
<dbReference type="Proteomes" id="UP000000589">
    <property type="component" value="Chromosome 6"/>
</dbReference>
<dbReference type="RNAct" id="P83741">
    <property type="molecule type" value="protein"/>
</dbReference>
<dbReference type="Bgee" id="ENSMUSG00000045962">
    <property type="expression patterns" value="Expressed in endothelial cell of lymphatic vessel and 291 other cell types or tissues"/>
</dbReference>
<dbReference type="ExpressionAtlas" id="P83741">
    <property type="expression patterns" value="baseline and differential"/>
</dbReference>
<dbReference type="GO" id="GO:0005737">
    <property type="term" value="C:cytoplasm"/>
    <property type="evidence" value="ECO:0000314"/>
    <property type="project" value="UniProtKB"/>
</dbReference>
<dbReference type="GO" id="GO:0005829">
    <property type="term" value="C:cytosol"/>
    <property type="evidence" value="ECO:0007669"/>
    <property type="project" value="Ensembl"/>
</dbReference>
<dbReference type="GO" id="GO:0043232">
    <property type="term" value="C:intracellular membraneless organelle"/>
    <property type="evidence" value="ECO:0000250"/>
    <property type="project" value="UniProtKB"/>
</dbReference>
<dbReference type="GO" id="GO:0072686">
    <property type="term" value="C:mitotic spindle"/>
    <property type="evidence" value="ECO:0000250"/>
    <property type="project" value="UniProtKB"/>
</dbReference>
<dbReference type="GO" id="GO:0005634">
    <property type="term" value="C:nucleus"/>
    <property type="evidence" value="ECO:0000250"/>
    <property type="project" value="UniProtKB"/>
</dbReference>
<dbReference type="GO" id="GO:0032991">
    <property type="term" value="C:protein-containing complex"/>
    <property type="evidence" value="ECO:0000314"/>
    <property type="project" value="MGI"/>
</dbReference>
<dbReference type="GO" id="GO:0005524">
    <property type="term" value="F:ATP binding"/>
    <property type="evidence" value="ECO:0007669"/>
    <property type="project" value="UniProtKB-KW"/>
</dbReference>
<dbReference type="GO" id="GO:0140693">
    <property type="term" value="F:molecular condensate scaffold activity"/>
    <property type="evidence" value="ECO:0000250"/>
    <property type="project" value="UniProtKB"/>
</dbReference>
<dbReference type="GO" id="GO:0019902">
    <property type="term" value="F:phosphatase binding"/>
    <property type="evidence" value="ECO:0000250"/>
    <property type="project" value="UniProtKB"/>
</dbReference>
<dbReference type="GO" id="GO:0030295">
    <property type="term" value="F:protein kinase activator activity"/>
    <property type="evidence" value="ECO:0007669"/>
    <property type="project" value="Ensembl"/>
</dbReference>
<dbReference type="GO" id="GO:0004672">
    <property type="term" value="F:protein kinase activity"/>
    <property type="evidence" value="ECO:0000314"/>
    <property type="project" value="MGI"/>
</dbReference>
<dbReference type="GO" id="GO:0019901">
    <property type="term" value="F:protein kinase binding"/>
    <property type="evidence" value="ECO:0007669"/>
    <property type="project" value="Ensembl"/>
</dbReference>
<dbReference type="GO" id="GO:0106310">
    <property type="term" value="F:protein serine kinase activity"/>
    <property type="evidence" value="ECO:0007669"/>
    <property type="project" value="RHEA"/>
</dbReference>
<dbReference type="GO" id="GO:0004674">
    <property type="term" value="F:protein serine/threonine kinase activity"/>
    <property type="evidence" value="ECO:0000315"/>
    <property type="project" value="BHF-UCL"/>
</dbReference>
<dbReference type="GO" id="GO:0006884">
    <property type="term" value="P:cell volume homeostasis"/>
    <property type="evidence" value="ECO:0000250"/>
    <property type="project" value="UniProtKB"/>
</dbReference>
<dbReference type="GO" id="GO:0071474">
    <property type="term" value="P:cellular hyperosmotic response"/>
    <property type="evidence" value="ECO:0000250"/>
    <property type="project" value="UniProtKB"/>
</dbReference>
<dbReference type="GO" id="GO:1990869">
    <property type="term" value="P:cellular response to chemokine"/>
    <property type="evidence" value="ECO:0000315"/>
    <property type="project" value="BHF-UCL"/>
</dbReference>
<dbReference type="GO" id="GO:0038116">
    <property type="term" value="P:chemokine (C-C motif) ligand 21 signaling pathway"/>
    <property type="evidence" value="ECO:0000315"/>
    <property type="project" value="BHF-UCL"/>
</dbReference>
<dbReference type="GO" id="GO:0007507">
    <property type="term" value="P:heart development"/>
    <property type="evidence" value="ECO:0000315"/>
    <property type="project" value="UniProtKB"/>
</dbReference>
<dbReference type="GO" id="GO:0030644">
    <property type="term" value="P:intracellular chloride ion homeostasis"/>
    <property type="evidence" value="ECO:0000316"/>
    <property type="project" value="MGI"/>
</dbReference>
<dbReference type="GO" id="GO:0035556">
    <property type="term" value="P:intracellular signal transduction"/>
    <property type="evidence" value="ECO:0007669"/>
    <property type="project" value="Ensembl"/>
</dbReference>
<dbReference type="GO" id="GO:0097022">
    <property type="term" value="P:lymphocyte migration into lymph node"/>
    <property type="evidence" value="ECO:0000315"/>
    <property type="project" value="BHF-UCL"/>
</dbReference>
<dbReference type="GO" id="GO:0140694">
    <property type="term" value="P:membraneless organelle assembly"/>
    <property type="evidence" value="ECO:0000250"/>
    <property type="project" value="UniProtKB"/>
</dbReference>
<dbReference type="GO" id="GO:0055080">
    <property type="term" value="P:monoatomic cation homeostasis"/>
    <property type="evidence" value="ECO:0000314"/>
    <property type="project" value="GO_Central"/>
</dbReference>
<dbReference type="GO" id="GO:0006811">
    <property type="term" value="P:monoatomic ion transport"/>
    <property type="evidence" value="ECO:0000314"/>
    <property type="project" value="UniProtKB"/>
</dbReference>
<dbReference type="GO" id="GO:0010507">
    <property type="term" value="P:negative regulation of autophagy"/>
    <property type="evidence" value="ECO:0000250"/>
    <property type="project" value="UniProtKB"/>
</dbReference>
<dbReference type="GO" id="GO:0033633">
    <property type="term" value="P:negative regulation of cell-cell adhesion mediated by integrin"/>
    <property type="evidence" value="ECO:0007669"/>
    <property type="project" value="Ensembl"/>
</dbReference>
<dbReference type="GO" id="GO:0034115">
    <property type="term" value="P:negative regulation of heterotypic cell-cell adhesion"/>
    <property type="evidence" value="ECO:0007669"/>
    <property type="project" value="Ensembl"/>
</dbReference>
<dbReference type="GO" id="GO:1903038">
    <property type="term" value="P:negative regulation of leukocyte cell-cell adhesion"/>
    <property type="evidence" value="ECO:0007669"/>
    <property type="project" value="Ensembl"/>
</dbReference>
<dbReference type="GO" id="GO:0090188">
    <property type="term" value="P:negative regulation of pancreatic juice secretion"/>
    <property type="evidence" value="ECO:0000315"/>
    <property type="project" value="MGI"/>
</dbReference>
<dbReference type="GO" id="GO:1903077">
    <property type="term" value="P:negative regulation of protein localization to plasma membrane"/>
    <property type="evidence" value="ECO:0000250"/>
    <property type="project" value="UniProtKB"/>
</dbReference>
<dbReference type="GO" id="GO:0031397">
    <property type="term" value="P:negative regulation of protein ubiquitination"/>
    <property type="evidence" value="ECO:0000250"/>
    <property type="project" value="UniProtKB"/>
</dbReference>
<dbReference type="GO" id="GO:0051058">
    <property type="term" value="P:negative regulation of small GTPase mediated signal transduction"/>
    <property type="evidence" value="ECO:0000315"/>
    <property type="project" value="BHF-UCL"/>
</dbReference>
<dbReference type="GO" id="GO:0010766">
    <property type="term" value="P:negative regulation of sodium ion transport"/>
    <property type="evidence" value="ECO:0000250"/>
    <property type="project" value="UniProtKB"/>
</dbReference>
<dbReference type="GO" id="GO:0045766">
    <property type="term" value="P:positive regulation of angiogenesis"/>
    <property type="evidence" value="ECO:0000315"/>
    <property type="project" value="UniProtKB"/>
</dbReference>
<dbReference type="GO" id="GO:0090263">
    <property type="term" value="P:positive regulation of canonical Wnt signaling pathway"/>
    <property type="evidence" value="ECO:0007669"/>
    <property type="project" value="Ensembl"/>
</dbReference>
<dbReference type="GO" id="GO:1903490">
    <property type="term" value="P:positive regulation of mitotic cytokinesis"/>
    <property type="evidence" value="ECO:0000250"/>
    <property type="project" value="UniProtKB"/>
</dbReference>
<dbReference type="GO" id="GO:0003084">
    <property type="term" value="P:positive regulation of systemic arterial blood pressure"/>
    <property type="evidence" value="ECO:0000315"/>
    <property type="project" value="MGI"/>
</dbReference>
<dbReference type="GO" id="GO:0010820">
    <property type="term" value="P:positive regulation of T cell chemotaxis"/>
    <property type="evidence" value="ECO:0007669"/>
    <property type="project" value="Ensembl"/>
</dbReference>
<dbReference type="GO" id="GO:1904595">
    <property type="term" value="P:positive regulation of termination of RNA polymerase II transcription"/>
    <property type="evidence" value="ECO:0000250"/>
    <property type="project" value="UniProtKB"/>
</dbReference>
<dbReference type="GO" id="GO:0055075">
    <property type="term" value="P:potassium ion homeostasis"/>
    <property type="evidence" value="ECO:0000315"/>
    <property type="project" value="MGI"/>
</dbReference>
<dbReference type="GO" id="GO:0045050">
    <property type="term" value="P:protein insertion into ER membrane by stop-transfer membrane-anchor sequence"/>
    <property type="evidence" value="ECO:0000250"/>
    <property type="project" value="UniProtKB"/>
</dbReference>
<dbReference type="GO" id="GO:0008217">
    <property type="term" value="P:regulation of blood pressure"/>
    <property type="evidence" value="ECO:0000315"/>
    <property type="project" value="MGI"/>
</dbReference>
<dbReference type="GO" id="GO:0010793">
    <property type="term" value="P:regulation of mRNA export from nucleus"/>
    <property type="evidence" value="ECO:0000250"/>
    <property type="project" value="UniProtKB"/>
</dbReference>
<dbReference type="GO" id="GO:1902305">
    <property type="term" value="P:regulation of sodium ion transmembrane transport"/>
    <property type="evidence" value="ECO:0000315"/>
    <property type="project" value="MGI"/>
</dbReference>
<dbReference type="GO" id="GO:0002028">
    <property type="term" value="P:regulation of sodium ion transport"/>
    <property type="evidence" value="ECO:0000250"/>
    <property type="project" value="UniProtKB"/>
</dbReference>
<dbReference type="GO" id="GO:0035725">
    <property type="term" value="P:sodium ion transmembrane transport"/>
    <property type="evidence" value="ECO:0000315"/>
    <property type="project" value="MGI"/>
</dbReference>
<dbReference type="GO" id="GO:0050852">
    <property type="term" value="P:T cell receptor signaling pathway"/>
    <property type="evidence" value="ECO:0000315"/>
    <property type="project" value="BHF-UCL"/>
</dbReference>
<dbReference type="CDD" id="cd14030">
    <property type="entry name" value="STKc_WNK1"/>
    <property type="match status" value="1"/>
</dbReference>
<dbReference type="FunFam" id="3.10.20.90:FF:000007">
    <property type="entry name" value="Serine/threonine-protein kinase WNK1 isoform 1"/>
    <property type="match status" value="1"/>
</dbReference>
<dbReference type="FunFam" id="1.10.510.10:FF:000006">
    <property type="entry name" value="Serine/threonine-protein kinase WNK1 isoform 2"/>
    <property type="match status" value="1"/>
</dbReference>
<dbReference type="FunFam" id="3.10.20.90:FF:000012">
    <property type="entry name" value="Serine/threonine-protein kinase WNK1 isoform 2"/>
    <property type="match status" value="1"/>
</dbReference>
<dbReference type="FunFam" id="3.30.200.20:FF:000494">
    <property type="entry name" value="serine/threonine-protein kinase WNK2 isoform X2"/>
    <property type="match status" value="1"/>
</dbReference>
<dbReference type="Gene3D" id="3.10.20.90">
    <property type="entry name" value="Phosphatidylinositol 3-kinase Catalytic Subunit, Chain A, domain 1"/>
    <property type="match status" value="2"/>
</dbReference>
<dbReference type="Gene3D" id="3.30.200.20">
    <property type="entry name" value="Phosphorylase Kinase, domain 1"/>
    <property type="match status" value="1"/>
</dbReference>
<dbReference type="Gene3D" id="1.10.510.10">
    <property type="entry name" value="Transferase(Phosphotransferase) domain 1"/>
    <property type="match status" value="1"/>
</dbReference>
<dbReference type="InterPro" id="IPR056865">
    <property type="entry name" value="CCTL2_WNK"/>
</dbReference>
<dbReference type="InterPro" id="IPR011009">
    <property type="entry name" value="Kinase-like_dom_sf"/>
</dbReference>
<dbReference type="InterPro" id="IPR024678">
    <property type="entry name" value="Kinase_OSR1/WNK_CCT"/>
</dbReference>
<dbReference type="InterPro" id="IPR000719">
    <property type="entry name" value="Prot_kinase_dom"/>
</dbReference>
<dbReference type="InterPro" id="IPR008271">
    <property type="entry name" value="Ser/Thr_kinase_AS"/>
</dbReference>
<dbReference type="InterPro" id="IPR050588">
    <property type="entry name" value="WNK_Ser-Thr_kinase"/>
</dbReference>
<dbReference type="PANTHER" id="PTHR13902">
    <property type="entry name" value="SERINE/THREONINE-PROTEIN KINASE WNK WITH NO LYSINE -RELATED"/>
    <property type="match status" value="1"/>
</dbReference>
<dbReference type="Pfam" id="PF24889">
    <property type="entry name" value="CCTL2_WNK"/>
    <property type="match status" value="1"/>
</dbReference>
<dbReference type="Pfam" id="PF12202">
    <property type="entry name" value="OSR1_C"/>
    <property type="match status" value="1"/>
</dbReference>
<dbReference type="Pfam" id="PF00069">
    <property type="entry name" value="Pkinase"/>
    <property type="match status" value="1"/>
</dbReference>
<dbReference type="SMART" id="SM00220">
    <property type="entry name" value="S_TKc"/>
    <property type="match status" value="1"/>
</dbReference>
<dbReference type="SUPFAM" id="SSF56112">
    <property type="entry name" value="Protein kinase-like (PK-like)"/>
    <property type="match status" value="1"/>
</dbReference>
<dbReference type="PROSITE" id="PS50011">
    <property type="entry name" value="PROTEIN_KINASE_DOM"/>
    <property type="match status" value="1"/>
</dbReference>
<dbReference type="PROSITE" id="PS00108">
    <property type="entry name" value="PROTEIN_KINASE_ST"/>
    <property type="match status" value="1"/>
</dbReference>
<evidence type="ECO:0000250" key="1">
    <source>
        <dbReference type="UniProtKB" id="Q96J92"/>
    </source>
</evidence>
<evidence type="ECO:0000250" key="2">
    <source>
        <dbReference type="UniProtKB" id="Q9H4A3"/>
    </source>
</evidence>
<evidence type="ECO:0000250" key="3">
    <source>
        <dbReference type="UniProtKB" id="Q9JIH7"/>
    </source>
</evidence>
<evidence type="ECO:0000255" key="4">
    <source>
        <dbReference type="PROSITE-ProRule" id="PRU00159"/>
    </source>
</evidence>
<evidence type="ECO:0000256" key="5">
    <source>
        <dbReference type="SAM" id="MobiDB-lite"/>
    </source>
</evidence>
<evidence type="ECO:0000269" key="6">
    <source>
    </source>
</evidence>
<evidence type="ECO:0000269" key="7">
    <source>
    </source>
</evidence>
<evidence type="ECO:0000269" key="8">
    <source>
    </source>
</evidence>
<evidence type="ECO:0000269" key="9">
    <source>
    </source>
</evidence>
<evidence type="ECO:0000269" key="10">
    <source>
    </source>
</evidence>
<evidence type="ECO:0000269" key="11">
    <source>
    </source>
</evidence>
<evidence type="ECO:0000269" key="12">
    <source>
    </source>
</evidence>
<evidence type="ECO:0000269" key="13">
    <source>
    </source>
</evidence>
<evidence type="ECO:0000269" key="14">
    <source>
    </source>
</evidence>
<evidence type="ECO:0000269" key="15">
    <source>
    </source>
</evidence>
<evidence type="ECO:0000269" key="16">
    <source>
    </source>
</evidence>
<evidence type="ECO:0000303" key="17">
    <source>
    </source>
</evidence>
<evidence type="ECO:0000303" key="18">
    <source>
    </source>
</evidence>
<evidence type="ECO:0000303" key="19">
    <source>
    </source>
</evidence>
<evidence type="ECO:0000303" key="20">
    <source>
    </source>
</evidence>
<evidence type="ECO:0000303" key="21">
    <source>
    </source>
</evidence>
<evidence type="ECO:0000303" key="22">
    <source>
    </source>
</evidence>
<evidence type="ECO:0000305" key="23"/>
<evidence type="ECO:0000305" key="24">
    <source>
    </source>
</evidence>
<evidence type="ECO:0000312" key="25">
    <source>
        <dbReference type="EMBL" id="AAH56761.1"/>
    </source>
</evidence>
<evidence type="ECO:0000312" key="26">
    <source>
        <dbReference type="MGI" id="MGI:2442092"/>
    </source>
</evidence>
<evidence type="ECO:0007744" key="27">
    <source>
    </source>
</evidence>
<evidence type="ECO:0007744" key="28">
    <source>
    </source>
</evidence>
<organism>
    <name type="scientific">Mus musculus</name>
    <name type="common">Mouse</name>
    <dbReference type="NCBI Taxonomy" id="10090"/>
    <lineage>
        <taxon>Eukaryota</taxon>
        <taxon>Metazoa</taxon>
        <taxon>Chordata</taxon>
        <taxon>Craniata</taxon>
        <taxon>Vertebrata</taxon>
        <taxon>Euteleostomi</taxon>
        <taxon>Mammalia</taxon>
        <taxon>Eutheria</taxon>
        <taxon>Euarchontoglires</taxon>
        <taxon>Glires</taxon>
        <taxon>Rodentia</taxon>
        <taxon>Myomorpha</taxon>
        <taxon>Muroidea</taxon>
        <taxon>Muridae</taxon>
        <taxon>Murinae</taxon>
        <taxon>Mus</taxon>
        <taxon>Mus</taxon>
    </lineage>
</organism>
<protein>
    <recommendedName>
        <fullName evidence="23">Serine/threonine-protein kinase WNK1</fullName>
        <ecNumber evidence="2">2.7.11.1</ecNumber>
    </recommendedName>
    <alternativeName>
        <fullName evidence="26">Protein kinase lysine-deficient 1</fullName>
    </alternativeName>
    <alternativeName>
        <fullName evidence="17">Protein kinase with no lysine 1</fullName>
    </alternativeName>
</protein>
<feature type="chain" id="PRO_0000086820" description="Serine/threonine-protein kinase WNK1">
    <location>
        <begin position="1"/>
        <end position="2377"/>
    </location>
</feature>
<feature type="domain" description="Protein kinase" evidence="4">
    <location>
        <begin position="221"/>
        <end position="479"/>
    </location>
</feature>
<feature type="region of interest" description="Disordered" evidence="5">
    <location>
        <begin position="1"/>
        <end position="79"/>
    </location>
</feature>
<feature type="region of interest" description="Disordered" evidence="5">
    <location>
        <begin position="93"/>
        <end position="203"/>
    </location>
</feature>
<feature type="region of interest" description="Autoinhibitory domain" evidence="3">
    <location>
        <begin position="488"/>
        <end position="555"/>
    </location>
</feature>
<feature type="region of interest" description="Disordered" evidence="5">
    <location>
        <begin position="573"/>
        <end position="782"/>
    </location>
</feature>
<feature type="region of interest" description="Interaction with KLHL3" evidence="1">
    <location>
        <begin position="629"/>
        <end position="639"/>
    </location>
</feature>
<feature type="region of interest" description="Disordered" evidence="5">
    <location>
        <begin position="1013"/>
        <end position="1114"/>
    </location>
</feature>
<feature type="region of interest" description="Disordered" evidence="5">
    <location>
        <begin position="1726"/>
        <end position="1760"/>
    </location>
</feature>
<feature type="region of interest" description="Disordered" evidence="5">
    <location>
        <begin position="1818"/>
        <end position="1847"/>
    </location>
</feature>
<feature type="region of interest" description="Disordered" evidence="5">
    <location>
        <begin position="1860"/>
        <end position="1945"/>
    </location>
</feature>
<feature type="region of interest" description="Disordered" evidence="5">
    <location>
        <begin position="1959"/>
        <end position="1984"/>
    </location>
</feature>
<feature type="region of interest" description="Disordered" evidence="5">
    <location>
        <begin position="1989"/>
        <end position="2008"/>
    </location>
</feature>
<feature type="region of interest" description="Disordered" evidence="5">
    <location>
        <begin position="2015"/>
        <end position="2064"/>
    </location>
</feature>
<feature type="region of interest" description="Disordered" evidence="5">
    <location>
        <begin position="2107"/>
        <end position="2191"/>
    </location>
</feature>
<feature type="region of interest" description="Disordered" evidence="5">
    <location>
        <begin position="2203"/>
        <end position="2239"/>
    </location>
</feature>
<feature type="region of interest" description="Amphipathic alpha-helix" evidence="2">
    <location>
        <begin position="2236"/>
        <end position="2256"/>
    </location>
</feature>
<feature type="region of interest" description="Disordered" evidence="5">
    <location>
        <begin position="2325"/>
        <end position="2344"/>
    </location>
</feature>
<feature type="short sequence motif" description="RFXV motif 1" evidence="2">
    <location>
        <begin position="1252"/>
        <end position="1255"/>
    </location>
</feature>
<feature type="short sequence motif" description="RFXV motif 2" evidence="2">
    <location>
        <begin position="1854"/>
        <end position="1857"/>
    </location>
</feature>
<feature type="short sequence motif" description="RFXV motif 3" evidence="2">
    <location>
        <begin position="1940"/>
        <end position="1943"/>
    </location>
</feature>
<feature type="short sequence motif" description="RFXV motif 4" evidence="2">
    <location>
        <begin position="1952"/>
        <end position="1955"/>
    </location>
</feature>
<feature type="compositionally biased region" description="Basic and acidic residues" evidence="5">
    <location>
        <begin position="48"/>
        <end position="64"/>
    </location>
</feature>
<feature type="compositionally biased region" description="Low complexity" evidence="5">
    <location>
        <begin position="101"/>
        <end position="111"/>
    </location>
</feature>
<feature type="compositionally biased region" description="Low complexity" evidence="5">
    <location>
        <begin position="127"/>
        <end position="141"/>
    </location>
</feature>
<feature type="compositionally biased region" description="Polar residues" evidence="5">
    <location>
        <begin position="149"/>
        <end position="158"/>
    </location>
</feature>
<feature type="compositionally biased region" description="Basic and acidic residues" evidence="5">
    <location>
        <begin position="573"/>
        <end position="588"/>
    </location>
</feature>
<feature type="compositionally biased region" description="Polar residues" evidence="5">
    <location>
        <begin position="593"/>
        <end position="628"/>
    </location>
</feature>
<feature type="compositionally biased region" description="Polar residues" evidence="5">
    <location>
        <begin position="638"/>
        <end position="705"/>
    </location>
</feature>
<feature type="compositionally biased region" description="Polar residues" evidence="5">
    <location>
        <begin position="713"/>
        <end position="733"/>
    </location>
</feature>
<feature type="compositionally biased region" description="Low complexity" evidence="5">
    <location>
        <begin position="734"/>
        <end position="746"/>
    </location>
</feature>
<feature type="compositionally biased region" description="Polar residues" evidence="5">
    <location>
        <begin position="747"/>
        <end position="782"/>
    </location>
</feature>
<feature type="compositionally biased region" description="Low complexity" evidence="5">
    <location>
        <begin position="1018"/>
        <end position="1028"/>
    </location>
</feature>
<feature type="compositionally biased region" description="Polar residues" evidence="5">
    <location>
        <begin position="1029"/>
        <end position="1038"/>
    </location>
</feature>
<feature type="compositionally biased region" description="Low complexity" evidence="5">
    <location>
        <begin position="1042"/>
        <end position="1058"/>
    </location>
</feature>
<feature type="compositionally biased region" description="Polar residues" evidence="5">
    <location>
        <begin position="1075"/>
        <end position="1085"/>
    </location>
</feature>
<feature type="compositionally biased region" description="Basic residues" evidence="5">
    <location>
        <begin position="1093"/>
        <end position="1114"/>
    </location>
</feature>
<feature type="compositionally biased region" description="Low complexity" evidence="5">
    <location>
        <begin position="1738"/>
        <end position="1748"/>
    </location>
</feature>
<feature type="compositionally biased region" description="Basic and acidic residues" evidence="5">
    <location>
        <begin position="1863"/>
        <end position="1879"/>
    </location>
</feature>
<feature type="compositionally biased region" description="Low complexity" evidence="5">
    <location>
        <begin position="1882"/>
        <end position="1900"/>
    </location>
</feature>
<feature type="compositionally biased region" description="Basic and acidic residues" evidence="5">
    <location>
        <begin position="1959"/>
        <end position="1969"/>
    </location>
</feature>
<feature type="compositionally biased region" description="Basic and acidic residues" evidence="5">
    <location>
        <begin position="1989"/>
        <end position="1998"/>
    </location>
</feature>
<feature type="compositionally biased region" description="Low complexity" evidence="5">
    <location>
        <begin position="2035"/>
        <end position="2057"/>
    </location>
</feature>
<feature type="compositionally biased region" description="Basic residues" evidence="5">
    <location>
        <begin position="2117"/>
        <end position="2129"/>
    </location>
</feature>
<feature type="compositionally biased region" description="Low complexity" evidence="5">
    <location>
        <begin position="2130"/>
        <end position="2140"/>
    </location>
</feature>
<feature type="compositionally biased region" description="Polar residues" evidence="5">
    <location>
        <begin position="2141"/>
        <end position="2191"/>
    </location>
</feature>
<feature type="compositionally biased region" description="Low complexity" evidence="5">
    <location>
        <begin position="2208"/>
        <end position="2232"/>
    </location>
</feature>
<feature type="active site" description="Proton acceptor" evidence="3">
    <location>
        <position position="368"/>
    </location>
</feature>
<feature type="binding site" evidence="2">
    <location>
        <position position="231"/>
    </location>
    <ligand>
        <name>ATP</name>
        <dbReference type="ChEBI" id="CHEBI:30616"/>
    </ligand>
</feature>
<feature type="binding site" evidence="3">
    <location>
        <position position="283"/>
    </location>
    <ligand>
        <name>chloride</name>
        <dbReference type="ChEBI" id="CHEBI:17996"/>
    </ligand>
</feature>
<feature type="binding site" evidence="3">
    <location>
        <position position="299"/>
    </location>
    <ligand>
        <name>chloride</name>
        <dbReference type="ChEBI" id="CHEBI:17996"/>
    </ligand>
</feature>
<feature type="binding site" evidence="2">
    <location>
        <begin position="301"/>
        <end position="304"/>
    </location>
    <ligand>
        <name>ATP</name>
        <dbReference type="ChEBI" id="CHEBI:30616"/>
    </ligand>
</feature>
<feature type="binding site" evidence="2">
    <location>
        <position position="351"/>
    </location>
    <ligand>
        <name>ATP</name>
        <dbReference type="ChEBI" id="CHEBI:30616"/>
    </ligand>
</feature>
<feature type="binding site" evidence="3">
    <location>
        <position position="369"/>
    </location>
    <ligand>
        <name>chloride</name>
        <dbReference type="ChEBI" id="CHEBI:17996"/>
    </ligand>
</feature>
<feature type="binding site" evidence="3">
    <location>
        <position position="371"/>
    </location>
    <ligand>
        <name>chloride</name>
        <dbReference type="ChEBI" id="CHEBI:17996"/>
    </ligand>
</feature>
<feature type="modified residue" description="Phosphothreonine" evidence="28">
    <location>
        <position position="17"/>
    </location>
</feature>
<feature type="modified residue" description="Phosphothreonine" evidence="3">
    <location>
        <position position="58"/>
    </location>
</feature>
<feature type="modified residue" description="Phosphoserine" evidence="2">
    <location>
        <position position="165"/>
    </location>
</feature>
<feature type="modified residue" description="Phosphoserine" evidence="2">
    <location>
        <position position="172"/>
    </location>
</feature>
<feature type="modified residue" description="Phosphoserine; by autocatalysis" evidence="3">
    <location>
        <position position="378"/>
    </location>
</feature>
<feature type="modified residue" description="Phosphoserine; by autocatalysis" evidence="3">
    <location>
        <position position="382"/>
    </location>
</feature>
<feature type="modified residue" description="Phosphoserine" evidence="2">
    <location>
        <position position="1256"/>
    </location>
</feature>
<feature type="modified residue" description="Phosphothreonine" evidence="2">
    <location>
        <position position="1843"/>
    </location>
</feature>
<feature type="modified residue" description="Phosphoserine" evidence="2">
    <location>
        <position position="1973"/>
    </location>
</feature>
<feature type="modified residue" description="Phosphoserine" evidence="2">
    <location>
        <position position="2006"/>
    </location>
</feature>
<feature type="modified residue" description="Phosphoserine" evidence="2">
    <location>
        <position position="2007"/>
    </location>
</feature>
<feature type="modified residue" description="Phosphoserine" evidence="2">
    <location>
        <position position="2022"/>
    </location>
</feature>
<feature type="modified residue" description="Phosphoserine" evidence="2">
    <location>
        <position position="2024"/>
    </location>
</feature>
<feature type="modified residue" description="Phosphoserine" evidence="27 28">
    <location>
        <position position="2027"/>
    </location>
</feature>
<feature type="modified residue" description="Phosphoserine" evidence="2">
    <location>
        <position position="2116"/>
    </location>
</feature>
<feature type="modified residue" description="Phosphoserine" evidence="28">
    <location>
        <position position="2265"/>
    </location>
</feature>
<feature type="modified residue" description="Phosphoserine" evidence="28">
    <location>
        <position position="2281"/>
    </location>
</feature>
<feature type="modified residue" description="Phosphoserine" evidence="2">
    <location>
        <position position="2365"/>
    </location>
</feature>
<feature type="modified residue" description="Phosphoserine" evidence="2">
    <location>
        <position position="2367"/>
    </location>
</feature>
<feature type="splice variant" id="VSP_058592" description="In isoform 7.">
    <original>MSDGAAEKQSGTPGFLTPPAPVPKNGSSSDSSVGEKLGATVADSGVGRTEEYRRRRHTMDKDSRGAAATTTPTEHRFFRRSVICDSNATALELPGLPLSIPQPSVPAVVPQSAPPEPHREETLTATVASQVSQQPSAAASPGEQAVVGSATTTVPSSTSKDRPVSQPSLVGSKEEPPPSRSGSGSGGASAKEAQEDRSQQQDDIEELETKAVGMSNDGRFLKFDIEIGRGSFKTVYKGLDTETTVEVAWCELQDRKLTKSERQRFKEEAEMLKGLQHPNIVRFYDSWESTVKGKKCIVLVTELMTSGTLKTYLKRFKVMKIKVLRSWCRQILKGLQFLHTRTPPIIHRDLKCDNIFITGPTGSVKIGDLGLATLKRASFAKSVIGTPEFMAPEMYEEKYDESVDVYAFGMCMLEMATSEYPYSECQNAAQIYRRVTS</original>
    <variation>MDFMKKDFCSVFVIVNSHCCCCSQKDCINE</variation>
    <location>
        <begin position="1"/>
        <end position="437"/>
    </location>
</feature>
<feature type="splice variant" id="VSP_058593" description="In isoform 7.">
    <location>
        <begin position="543"/>
        <end position="2377"/>
    </location>
</feature>
<feature type="splice variant" id="VSP_040271" description="In isoform 2." evidence="23">
    <original>AQGQNQGQPSSSLAGVLSSQPIQHPQQQGIQPTVPSQQAVQYSLPQAASSSEGTTAQPVSQPQVSAGTQLPVSQTVATVQGEPHIPVSTQPSVVPVHSGAHFLPMGQPIPTSLLPQYPVSQIPISTPHVSTAQTGFSSVPITMAAGINQPLLTLASSATASSIPGGSPVVPNQLPTLLQPVNQLQSQVHPQLLQPTTVQSIGIPANLGQAAEGPLPSGDVLYQGFPSRLPPQYPGDSNIAPSSNVASVCIHSTVLAPPSMPTEALATQGYFPTVVQPYVESTPLVPMGSVGGQVQVSQPAVSLTQQPPTTSSQQAVLE</original>
    <variation>PRRGRSMSVCVPHLSAVPSLSRISPSAPSTPPPVLSAPLCPSLLRTAPEETFAEKLSKALESVLPMHSASQRKHRRSSLPSLFVTTPQSMAHPCGGTPTYPESQIFFPTIHERPVSFSPPPTCPPKVAISQRRKSTSFLEAQTRHFQPLLRTVGQNHLPPGSSPTNWTPEAIVMLGATANRVNRELCEMQVQPVFEPTQIYSDYRPGLVLAEEAHYFIPQETVYLAGVHYQAQVAGQYEGISYNSPVLSSPMKQISEQKPVPGGPASSSVFEFPSGQAFLVGHLQNLRLDSGPSPASPLSSISAPNSTDATHLKFHPVFVPHSAPAVLTNSNENRSNCVFEFHAQTPSSSGEGGGILPQRVYRNRQVAVDSNQEELSPQSVGLHCHLQPVTEEQRNNHAPELTISVVEPMGQIWPIGSPEYSSDSSQITSSDLSDFQSPPPTGGTAAPFGSDVSLPFIRLPQTVLQESPLFFCFPQGTTSQQVLSASYSSGGSTLHPQAQGQNQGQPSSSLAGVLSSQPIQHPQQQGIQPTVPSQQAVQYSLPQAASSSEGTTAQPVSQPQVSAGTQ</variation>
    <location>
        <begin position="715"/>
        <end position="1032"/>
    </location>
</feature>
<feature type="splice variant" id="VSP_040272" description="In isoform 3." evidence="23">
    <original>AQGQNQGQPSSSLAGVLSSQPIQHPQQQGIQPTVPSQQAVQYSLPQAASSSEGTTAQPVSQPQVSAGTQLPVSQTVATVQGEPHIPVSTQPSVVPVHSGAHFLPMGQPIPTSLLPQYPVSQIPISTPHVSTAQTGFSSVPITMAAGINQPLLTLASSATASSIPGGSPVVPNQLPTLLQPVNQLQSQVHPQLLQPTTVQSIGIPANLGQAAEGPLPSGDVLY</original>
    <variation>PQSMAHPCGGTPTYPESQIFFPTIHERPVSFSPPPTCPPKVAISQRRKSTSFLEAQTRHFQPLLRTVGQNHLPPGSSPTNWTPEAIVMLGATANRVNRELCEMQVQPVFEPTQIYSDYRPGLVLAEEAHYFIPQETVYLAGVHYQAQVAGQYEGISYNSPVLSSPMKQISEQKPVPGGPASSSVFEFPSGQAFLVGHLQNLRLDSGPSPASPLSSISAPNSTDATHLKFHPVFVPHSAPAVLTNSNENRSNCVFEFHAQTPSSSGEGGGILPQRVYRNRQVAVDSNQEELSPQSVGLHCHLQPVTEEQRNNHAPELTISVVEPMGQIWPIGSPEYSSDSSQITSSDLSDFQSPPPTGGTAAPFGSDVSLPFIRLPQTVLQESPLFFCFPQGTTSQQVLSASYSSGGSTLHPQAQGQNQGQPSSSLAGVLSSQPIQHPQQQGIQPTVPSQQAVQYSLPQAASSSEGTTAQPVSQPQVSAGT</variation>
    <location>
        <begin position="715"/>
        <end position="936"/>
    </location>
</feature>
<feature type="splice variant" id="VSP_040273" description="In isoform 4." evidence="20">
    <location>
        <begin position="784"/>
        <end position="1032"/>
    </location>
</feature>
<feature type="splice variant" id="VSP_040274" description="In isoform 5." evidence="20">
    <location>
        <begin position="784"/>
        <end position="937"/>
    </location>
</feature>
<feature type="splice variant" id="VSP_040275" description="In isoform 6." evidence="19">
    <original>LPVSQ</original>
    <variation>VNSNF</variation>
    <location>
        <begin position="784"/>
        <end position="788"/>
    </location>
</feature>
<feature type="splice variant" id="VSP_040276" description="In isoform 6." evidence="19">
    <location>
        <begin position="789"/>
        <end position="2377"/>
    </location>
</feature>
<feature type="splice variant" id="VSP_040277" description="In isoform 5." evidence="20">
    <location>
        <begin position="1787"/>
        <end position="1814"/>
    </location>
</feature>
<feature type="mutagenesis site" description="No effect on inhibition of SLC4A4." evidence="15">
    <original>D</original>
    <variation>A</variation>
    <location>
        <position position="368"/>
    </location>
</feature>
<feature type="sequence conflict" description="In Ref. 1; AAQ77243." evidence="23" ref="1">
    <original>G</original>
    <variation>R</variation>
    <location>
        <position position="1220"/>
    </location>
</feature>
<feature type="sequence conflict" description="In Ref. 1; AAQ77243." evidence="23" ref="1">
    <original>S</original>
    <variation>C</variation>
    <location>
        <position position="1230"/>
    </location>
</feature>
<gene>
    <name evidence="17 26" type="primary">Wnk1</name>
    <name evidence="18" type="synonym">Hsn2</name>
    <name evidence="26" type="synonym">Prkwnk1</name>
</gene>